<keyword id="KW-0067">ATP-binding</keyword>
<keyword id="KW-0418">Kinase</keyword>
<keyword id="KW-0545">Nucleotide biosynthesis</keyword>
<keyword id="KW-0547">Nucleotide-binding</keyword>
<keyword id="KW-0808">Transferase</keyword>
<reference key="1">
    <citation type="journal article" date="2007" name="PLoS Genet.">
        <title>Genome analysis of Minibacterium massiliensis highlights the convergent evolution of water-living bacteria.</title>
        <authorList>
            <person name="Audic S."/>
            <person name="Robert C."/>
            <person name="Campagna B."/>
            <person name="Parinello H."/>
            <person name="Claverie J.-M."/>
            <person name="Raoult D."/>
            <person name="Drancourt M."/>
        </authorList>
    </citation>
    <scope>NUCLEOTIDE SEQUENCE [LARGE SCALE GENOMIC DNA]</scope>
    <source>
        <strain>Marseille</strain>
    </source>
</reference>
<organism>
    <name type="scientific">Janthinobacterium sp. (strain Marseille)</name>
    <name type="common">Minibacterium massiliensis</name>
    <dbReference type="NCBI Taxonomy" id="375286"/>
    <lineage>
        <taxon>Bacteria</taxon>
        <taxon>Pseudomonadati</taxon>
        <taxon>Pseudomonadota</taxon>
        <taxon>Betaproteobacteria</taxon>
        <taxon>Burkholderiales</taxon>
        <taxon>Oxalobacteraceae</taxon>
        <taxon>Janthinobacterium</taxon>
    </lineage>
</organism>
<protein>
    <recommendedName>
        <fullName evidence="1">Thymidylate kinase</fullName>
        <ecNumber evidence="1">2.7.4.9</ecNumber>
    </recommendedName>
    <alternativeName>
        <fullName evidence="1">dTMP kinase</fullName>
    </alternativeName>
</protein>
<accession>A6SZH9</accession>
<comment type="function">
    <text evidence="1">Phosphorylation of dTMP to form dTDP in both de novo and salvage pathways of dTTP synthesis.</text>
</comment>
<comment type="catalytic activity">
    <reaction evidence="1">
        <text>dTMP + ATP = dTDP + ADP</text>
        <dbReference type="Rhea" id="RHEA:13517"/>
        <dbReference type="ChEBI" id="CHEBI:30616"/>
        <dbReference type="ChEBI" id="CHEBI:58369"/>
        <dbReference type="ChEBI" id="CHEBI:63528"/>
        <dbReference type="ChEBI" id="CHEBI:456216"/>
        <dbReference type="EC" id="2.7.4.9"/>
    </reaction>
</comment>
<comment type="similarity">
    <text evidence="1">Belongs to the thymidylate kinase family.</text>
</comment>
<sequence length="204" mass="23008">MTTGKFITFEGIDGAGKSTHLSFVAELLCERKKTVVVTREPGGTSLGEELREILLHEKMHLETEALLMFAARREHIAQVIAPALERGDWVISDRFTDATFAYQGGGRKLDRAKLNALEQWVHPHLQPHLTLLFDVPLDVARARLDATRTLDKFEQEKAEFFAATRAEYLRRAAEFPQRFHVIDSTRSIAAIQEQLRAIVAGIDS</sequence>
<name>KTHY_JANMA</name>
<gene>
    <name evidence="1" type="primary">tmk</name>
    <name type="ordered locus">mma_1986</name>
</gene>
<evidence type="ECO:0000255" key="1">
    <source>
        <dbReference type="HAMAP-Rule" id="MF_00165"/>
    </source>
</evidence>
<proteinExistence type="inferred from homology"/>
<dbReference type="EC" id="2.7.4.9" evidence="1"/>
<dbReference type="EMBL" id="CP000269">
    <property type="protein sequence ID" value="ABR88747.1"/>
    <property type="molecule type" value="Genomic_DNA"/>
</dbReference>
<dbReference type="RefSeq" id="WP_012079839.1">
    <property type="nucleotide sequence ID" value="NC_009659.1"/>
</dbReference>
<dbReference type="SMR" id="A6SZH9"/>
<dbReference type="STRING" id="375286.mma_1986"/>
<dbReference type="KEGG" id="mms:mma_1986"/>
<dbReference type="eggNOG" id="COG0125">
    <property type="taxonomic scope" value="Bacteria"/>
</dbReference>
<dbReference type="HOGENOM" id="CLU_049131_0_2_4"/>
<dbReference type="OrthoDB" id="9774907at2"/>
<dbReference type="Proteomes" id="UP000006388">
    <property type="component" value="Chromosome"/>
</dbReference>
<dbReference type="GO" id="GO:0005829">
    <property type="term" value="C:cytosol"/>
    <property type="evidence" value="ECO:0007669"/>
    <property type="project" value="TreeGrafter"/>
</dbReference>
<dbReference type="GO" id="GO:0005524">
    <property type="term" value="F:ATP binding"/>
    <property type="evidence" value="ECO:0007669"/>
    <property type="project" value="UniProtKB-UniRule"/>
</dbReference>
<dbReference type="GO" id="GO:0004798">
    <property type="term" value="F:dTMP kinase activity"/>
    <property type="evidence" value="ECO:0007669"/>
    <property type="project" value="UniProtKB-UniRule"/>
</dbReference>
<dbReference type="GO" id="GO:0006233">
    <property type="term" value="P:dTDP biosynthetic process"/>
    <property type="evidence" value="ECO:0007669"/>
    <property type="project" value="InterPro"/>
</dbReference>
<dbReference type="GO" id="GO:0006235">
    <property type="term" value="P:dTTP biosynthetic process"/>
    <property type="evidence" value="ECO:0007669"/>
    <property type="project" value="UniProtKB-UniRule"/>
</dbReference>
<dbReference type="GO" id="GO:0006227">
    <property type="term" value="P:dUDP biosynthetic process"/>
    <property type="evidence" value="ECO:0007669"/>
    <property type="project" value="TreeGrafter"/>
</dbReference>
<dbReference type="CDD" id="cd01672">
    <property type="entry name" value="TMPK"/>
    <property type="match status" value="1"/>
</dbReference>
<dbReference type="FunFam" id="3.40.50.300:FF:000225">
    <property type="entry name" value="Thymidylate kinase"/>
    <property type="match status" value="1"/>
</dbReference>
<dbReference type="Gene3D" id="3.40.50.300">
    <property type="entry name" value="P-loop containing nucleotide triphosphate hydrolases"/>
    <property type="match status" value="1"/>
</dbReference>
<dbReference type="HAMAP" id="MF_00165">
    <property type="entry name" value="Thymidylate_kinase"/>
    <property type="match status" value="1"/>
</dbReference>
<dbReference type="InterPro" id="IPR027417">
    <property type="entry name" value="P-loop_NTPase"/>
</dbReference>
<dbReference type="InterPro" id="IPR039430">
    <property type="entry name" value="Thymidylate_kin-like_dom"/>
</dbReference>
<dbReference type="InterPro" id="IPR018094">
    <property type="entry name" value="Thymidylate_kinase"/>
</dbReference>
<dbReference type="NCBIfam" id="TIGR00041">
    <property type="entry name" value="DTMP_kinase"/>
    <property type="match status" value="1"/>
</dbReference>
<dbReference type="PANTHER" id="PTHR10344">
    <property type="entry name" value="THYMIDYLATE KINASE"/>
    <property type="match status" value="1"/>
</dbReference>
<dbReference type="PANTHER" id="PTHR10344:SF4">
    <property type="entry name" value="UMP-CMP KINASE 2, MITOCHONDRIAL"/>
    <property type="match status" value="1"/>
</dbReference>
<dbReference type="Pfam" id="PF02223">
    <property type="entry name" value="Thymidylate_kin"/>
    <property type="match status" value="1"/>
</dbReference>
<dbReference type="SUPFAM" id="SSF52540">
    <property type="entry name" value="P-loop containing nucleoside triphosphate hydrolases"/>
    <property type="match status" value="1"/>
</dbReference>
<feature type="chain" id="PRO_1000023203" description="Thymidylate kinase">
    <location>
        <begin position="1"/>
        <end position="204"/>
    </location>
</feature>
<feature type="binding site" evidence="1">
    <location>
        <begin position="11"/>
        <end position="18"/>
    </location>
    <ligand>
        <name>ATP</name>
        <dbReference type="ChEBI" id="CHEBI:30616"/>
    </ligand>
</feature>